<protein>
    <recommendedName>
        <fullName>HssA/B-like protein 17</fullName>
    </recommendedName>
</protein>
<dbReference type="EMBL" id="AAFI02000008">
    <property type="protein sequence ID" value="EAL70964.1"/>
    <property type="molecule type" value="Genomic_DNA"/>
</dbReference>
<dbReference type="RefSeq" id="XP_645000.1">
    <property type="nucleotide sequence ID" value="XM_639908.1"/>
</dbReference>
<dbReference type="PaxDb" id="44689-DDB0230165"/>
<dbReference type="EnsemblProtists" id="EAL70964">
    <property type="protein sequence ID" value="EAL70964"/>
    <property type="gene ID" value="DDB_G0272654"/>
</dbReference>
<dbReference type="GeneID" id="8618677"/>
<dbReference type="KEGG" id="ddi:DDB_G0272654"/>
<dbReference type="dictyBase" id="DDB_G0272654">
    <property type="gene designation" value="sigN25"/>
</dbReference>
<dbReference type="HOGENOM" id="CLU_190274_0_0_1"/>
<dbReference type="InParanoid" id="Q7KWN3"/>
<dbReference type="PRO" id="PR:Q7KWN3"/>
<dbReference type="Proteomes" id="UP000002195">
    <property type="component" value="Chromosome 2"/>
</dbReference>
<dbReference type="InterPro" id="IPR008455">
    <property type="entry name" value="HssA/B-related"/>
</dbReference>
<dbReference type="PANTHER" id="PTHR31857">
    <property type="entry name" value="HSSA/B-LIKE PROTEIN 17-RELATED"/>
    <property type="match status" value="1"/>
</dbReference>
<dbReference type="PANTHER" id="PTHR31857:SF2">
    <property type="entry name" value="HSSA_B-LIKE PROTEIN 17-RELATED"/>
    <property type="match status" value="1"/>
</dbReference>
<dbReference type="Pfam" id="PF05710">
    <property type="entry name" value="Coiled"/>
    <property type="match status" value="1"/>
</dbReference>
<organism>
    <name type="scientific">Dictyostelium discoideum</name>
    <name type="common">Social amoeba</name>
    <dbReference type="NCBI Taxonomy" id="44689"/>
    <lineage>
        <taxon>Eukaryota</taxon>
        <taxon>Amoebozoa</taxon>
        <taxon>Evosea</taxon>
        <taxon>Eumycetozoa</taxon>
        <taxon>Dictyostelia</taxon>
        <taxon>Dictyosteliales</taxon>
        <taxon>Dictyosteliaceae</taxon>
        <taxon>Dictyostelium</taxon>
    </lineage>
</organism>
<feature type="chain" id="PRO_0000330387" description="HssA/B-like protein 17">
    <location>
        <begin position="1"/>
        <end position="88"/>
    </location>
</feature>
<gene>
    <name type="primary">hssl17</name>
    <name type="ORF">DDB_G0272654</name>
</gene>
<reference key="1">
    <citation type="journal article" date="2002" name="Nature">
        <title>Sequence and analysis of chromosome 2 of Dictyostelium discoideum.</title>
        <authorList>
            <person name="Gloeckner G."/>
            <person name="Eichinger L."/>
            <person name="Szafranski K."/>
            <person name="Pachebat J.A."/>
            <person name="Bankier A.T."/>
            <person name="Dear P.H."/>
            <person name="Lehmann R."/>
            <person name="Baumgart C."/>
            <person name="Parra G."/>
            <person name="Abril J.F."/>
            <person name="Guigo R."/>
            <person name="Kumpf K."/>
            <person name="Tunggal B."/>
            <person name="Cox E.C."/>
            <person name="Quail M.A."/>
            <person name="Platzer M."/>
            <person name="Rosenthal A."/>
            <person name="Noegel A.A."/>
        </authorList>
    </citation>
    <scope>NUCLEOTIDE SEQUENCE [LARGE SCALE GENOMIC DNA]</scope>
    <source>
        <strain>AX4</strain>
    </source>
</reference>
<reference key="2">
    <citation type="journal article" date="2005" name="Nature">
        <title>The genome of the social amoeba Dictyostelium discoideum.</title>
        <authorList>
            <person name="Eichinger L."/>
            <person name="Pachebat J.A."/>
            <person name="Gloeckner G."/>
            <person name="Rajandream M.A."/>
            <person name="Sucgang R."/>
            <person name="Berriman M."/>
            <person name="Song J."/>
            <person name="Olsen R."/>
            <person name="Szafranski K."/>
            <person name="Xu Q."/>
            <person name="Tunggal B."/>
            <person name="Kummerfeld S."/>
            <person name="Madera M."/>
            <person name="Konfortov B.A."/>
            <person name="Rivero F."/>
            <person name="Bankier A.T."/>
            <person name="Lehmann R."/>
            <person name="Hamlin N."/>
            <person name="Davies R."/>
            <person name="Gaudet P."/>
            <person name="Fey P."/>
            <person name="Pilcher K."/>
            <person name="Chen G."/>
            <person name="Saunders D."/>
            <person name="Sodergren E.J."/>
            <person name="Davis P."/>
            <person name="Kerhornou A."/>
            <person name="Nie X."/>
            <person name="Hall N."/>
            <person name="Anjard C."/>
            <person name="Hemphill L."/>
            <person name="Bason N."/>
            <person name="Farbrother P."/>
            <person name="Desany B."/>
            <person name="Just E."/>
            <person name="Morio T."/>
            <person name="Rost R."/>
            <person name="Churcher C.M."/>
            <person name="Cooper J."/>
            <person name="Haydock S."/>
            <person name="van Driessche N."/>
            <person name="Cronin A."/>
            <person name="Goodhead I."/>
            <person name="Muzny D.M."/>
            <person name="Mourier T."/>
            <person name="Pain A."/>
            <person name="Lu M."/>
            <person name="Harper D."/>
            <person name="Lindsay R."/>
            <person name="Hauser H."/>
            <person name="James K.D."/>
            <person name="Quiles M."/>
            <person name="Madan Babu M."/>
            <person name="Saito T."/>
            <person name="Buchrieser C."/>
            <person name="Wardroper A."/>
            <person name="Felder M."/>
            <person name="Thangavelu M."/>
            <person name="Johnson D."/>
            <person name="Knights A."/>
            <person name="Loulseged H."/>
            <person name="Mungall K.L."/>
            <person name="Oliver K."/>
            <person name="Price C."/>
            <person name="Quail M.A."/>
            <person name="Urushihara H."/>
            <person name="Hernandez J."/>
            <person name="Rabbinowitsch E."/>
            <person name="Steffen D."/>
            <person name="Sanders M."/>
            <person name="Ma J."/>
            <person name="Kohara Y."/>
            <person name="Sharp S."/>
            <person name="Simmonds M.N."/>
            <person name="Spiegler S."/>
            <person name="Tivey A."/>
            <person name="Sugano S."/>
            <person name="White B."/>
            <person name="Walker D."/>
            <person name="Woodward J.R."/>
            <person name="Winckler T."/>
            <person name="Tanaka Y."/>
            <person name="Shaulsky G."/>
            <person name="Schleicher M."/>
            <person name="Weinstock G.M."/>
            <person name="Rosenthal A."/>
            <person name="Cox E.C."/>
            <person name="Chisholm R.L."/>
            <person name="Gibbs R.A."/>
            <person name="Loomis W.F."/>
            <person name="Platzer M."/>
            <person name="Kay R.R."/>
            <person name="Williams J.G."/>
            <person name="Dear P.H."/>
            <person name="Noegel A.A."/>
            <person name="Barrell B.G."/>
            <person name="Kuspa A."/>
        </authorList>
    </citation>
    <scope>NUCLEOTIDE SEQUENCE [LARGE SCALE GENOMIC DNA]</scope>
    <source>
        <strain>AX4</strain>
    </source>
</reference>
<sequence length="88" mass="8284">MTILASISSIGNVKSISKSNNLSSLSNSSSSLQSMNSIQCGGCGNGGLLGAVGGLVGGVLTGTGVIVGSVLHGVGSILTGGSNNCGCN</sequence>
<evidence type="ECO:0000305" key="1"/>
<keyword id="KW-1185">Reference proteome</keyword>
<accession>Q7KWN3</accession>
<accession>Q558R6</accession>
<proteinExistence type="inferred from homology"/>
<name>HSL17_DICDI</name>
<comment type="similarity">
    <text evidence="1">Belongs to the hssA/B family.</text>
</comment>